<protein>
    <recommendedName>
        <fullName evidence="1">Exodeoxyribonuclease 7 large subunit</fullName>
        <ecNumber evidence="1">3.1.11.6</ecNumber>
    </recommendedName>
    <alternativeName>
        <fullName evidence="1">Exodeoxyribonuclease VII large subunit</fullName>
        <shortName evidence="1">Exonuclease VII large subunit</shortName>
    </alternativeName>
</protein>
<comment type="function">
    <text evidence="1">Bidirectionally degrades single-stranded DNA into large acid-insoluble oligonucleotides, which are then degraded further into small acid-soluble oligonucleotides.</text>
</comment>
<comment type="catalytic activity">
    <reaction evidence="1">
        <text>Exonucleolytic cleavage in either 5'- to 3'- or 3'- to 5'-direction to yield nucleoside 5'-phosphates.</text>
        <dbReference type="EC" id="3.1.11.6"/>
    </reaction>
</comment>
<comment type="subunit">
    <text evidence="1">Heterooligomer composed of large and small subunits.</text>
</comment>
<comment type="subcellular location">
    <subcellularLocation>
        <location evidence="1">Cytoplasm</location>
    </subcellularLocation>
</comment>
<comment type="similarity">
    <text evidence="1">Belongs to the XseA family.</text>
</comment>
<accession>B1LAQ5</accession>
<organism>
    <name type="scientific">Thermotoga sp. (strain RQ2)</name>
    <dbReference type="NCBI Taxonomy" id="126740"/>
    <lineage>
        <taxon>Bacteria</taxon>
        <taxon>Thermotogati</taxon>
        <taxon>Thermotogota</taxon>
        <taxon>Thermotogae</taxon>
        <taxon>Thermotogales</taxon>
        <taxon>Thermotogaceae</taxon>
        <taxon>Thermotoga</taxon>
    </lineage>
</organism>
<sequence length="394" mass="45095">MKDYTYSVTEINEYIKDLIEGDPYLTNVSVYGEISGVRPRKGHIFFSLVEENARLECVIFGGDNMGIRLQEGRMALVEGSVSVYIPHGTYRFICSNVRYLDQAGMYQIKFETTLKKLLEEGLLSRPKKTVPRFPRKIGIITSRDSAALQDVIRTARERKAPIEIYVFHTSVQGDSAREELIKALRKANEYDLDLVMIVRGGGSKEDLWGFNEEDVIREILKLRHPVVTGIGHEIDRVIADFVADVSMHTPTGAAEYVIPDASEIHEDLDSFLEKLIASLSNRFDMEERRLETLYFRLRMIGRRKLELNEFKIERVKELAAKLRKKLMDCFEQDQEKLESLGRMLESLNPLRPLERGFVLVKKEGEIVKESSDLKRGDVVSLVFKDGTKKAQVIG</sequence>
<keyword id="KW-0963">Cytoplasm</keyword>
<keyword id="KW-0269">Exonuclease</keyword>
<keyword id="KW-0378">Hydrolase</keyword>
<keyword id="KW-0540">Nuclease</keyword>
<reference key="1">
    <citation type="journal article" date="2011" name="J. Bacteriol.">
        <title>Genome sequence of Thermotoga sp. strain RQ2, a hyperthermophilic bacterium isolated from a geothermally heated region of the seafloor near Ribeira Quente, the Azores.</title>
        <authorList>
            <person name="Swithers K.S."/>
            <person name="DiPippo J.L."/>
            <person name="Bruce D.C."/>
            <person name="Detter C."/>
            <person name="Tapia R."/>
            <person name="Han S."/>
            <person name="Saunders E."/>
            <person name="Goodwin L.A."/>
            <person name="Han J."/>
            <person name="Woyke T."/>
            <person name="Pitluck S."/>
            <person name="Pennacchio L."/>
            <person name="Nolan M."/>
            <person name="Mikhailova N."/>
            <person name="Lykidis A."/>
            <person name="Land M.L."/>
            <person name="Brettin T."/>
            <person name="Stetter K.O."/>
            <person name="Nelson K.E."/>
            <person name="Gogarten J.P."/>
            <person name="Noll K.M."/>
        </authorList>
    </citation>
    <scope>NUCLEOTIDE SEQUENCE [LARGE SCALE GENOMIC DNA]</scope>
    <source>
        <strain>RQ2</strain>
    </source>
</reference>
<feature type="chain" id="PRO_1000122099" description="Exodeoxyribonuclease 7 large subunit">
    <location>
        <begin position="1"/>
        <end position="394"/>
    </location>
</feature>
<dbReference type="EC" id="3.1.11.6" evidence="1"/>
<dbReference type="EMBL" id="CP000969">
    <property type="protein sequence ID" value="ACB09403.1"/>
    <property type="molecule type" value="Genomic_DNA"/>
</dbReference>
<dbReference type="RefSeq" id="WP_012310913.1">
    <property type="nucleotide sequence ID" value="NC_010483.1"/>
</dbReference>
<dbReference type="SMR" id="B1LAQ5"/>
<dbReference type="KEGG" id="trq:TRQ2_1056"/>
<dbReference type="HOGENOM" id="CLU_023625_2_0_0"/>
<dbReference type="Proteomes" id="UP000001687">
    <property type="component" value="Chromosome"/>
</dbReference>
<dbReference type="GO" id="GO:0005737">
    <property type="term" value="C:cytoplasm"/>
    <property type="evidence" value="ECO:0007669"/>
    <property type="project" value="UniProtKB-SubCell"/>
</dbReference>
<dbReference type="GO" id="GO:0009318">
    <property type="term" value="C:exodeoxyribonuclease VII complex"/>
    <property type="evidence" value="ECO:0007669"/>
    <property type="project" value="InterPro"/>
</dbReference>
<dbReference type="GO" id="GO:0008855">
    <property type="term" value="F:exodeoxyribonuclease VII activity"/>
    <property type="evidence" value="ECO:0007669"/>
    <property type="project" value="UniProtKB-UniRule"/>
</dbReference>
<dbReference type="GO" id="GO:0003676">
    <property type="term" value="F:nucleic acid binding"/>
    <property type="evidence" value="ECO:0007669"/>
    <property type="project" value="InterPro"/>
</dbReference>
<dbReference type="GO" id="GO:0006308">
    <property type="term" value="P:DNA catabolic process"/>
    <property type="evidence" value="ECO:0007669"/>
    <property type="project" value="UniProtKB-UniRule"/>
</dbReference>
<dbReference type="CDD" id="cd04489">
    <property type="entry name" value="ExoVII_LU_OBF"/>
    <property type="match status" value="1"/>
</dbReference>
<dbReference type="HAMAP" id="MF_00378">
    <property type="entry name" value="Exonuc_7_L"/>
    <property type="match status" value="1"/>
</dbReference>
<dbReference type="InterPro" id="IPR003753">
    <property type="entry name" value="Exonuc_VII_L"/>
</dbReference>
<dbReference type="InterPro" id="IPR020579">
    <property type="entry name" value="Exonuc_VII_lsu_C"/>
</dbReference>
<dbReference type="InterPro" id="IPR025824">
    <property type="entry name" value="OB-fold_nuc-bd_dom"/>
</dbReference>
<dbReference type="NCBIfam" id="TIGR00237">
    <property type="entry name" value="xseA"/>
    <property type="match status" value="1"/>
</dbReference>
<dbReference type="PANTHER" id="PTHR30008">
    <property type="entry name" value="EXODEOXYRIBONUCLEASE 7 LARGE SUBUNIT"/>
    <property type="match status" value="1"/>
</dbReference>
<dbReference type="PANTHER" id="PTHR30008:SF0">
    <property type="entry name" value="EXODEOXYRIBONUCLEASE 7 LARGE SUBUNIT"/>
    <property type="match status" value="1"/>
</dbReference>
<dbReference type="Pfam" id="PF02601">
    <property type="entry name" value="Exonuc_VII_L"/>
    <property type="match status" value="2"/>
</dbReference>
<dbReference type="Pfam" id="PF13742">
    <property type="entry name" value="tRNA_anti_2"/>
    <property type="match status" value="1"/>
</dbReference>
<evidence type="ECO:0000255" key="1">
    <source>
        <dbReference type="HAMAP-Rule" id="MF_00378"/>
    </source>
</evidence>
<name>EX7L_THESQ</name>
<gene>
    <name evidence="1" type="primary">xseA</name>
    <name type="ordered locus">TRQ2_1056</name>
</gene>
<proteinExistence type="inferred from homology"/>